<accession>Q3JQ09</accession>
<feature type="chain" id="PRO_0000226834" description="Large ribosomal subunit protein bL19">
    <location>
        <begin position="1"/>
        <end position="129"/>
    </location>
</feature>
<reference key="1">
    <citation type="journal article" date="2010" name="Genome Biol. Evol.">
        <title>Continuing evolution of Burkholderia mallei through genome reduction and large-scale rearrangements.</title>
        <authorList>
            <person name="Losada L."/>
            <person name="Ronning C.M."/>
            <person name="DeShazer D."/>
            <person name="Woods D."/>
            <person name="Fedorova N."/>
            <person name="Kim H.S."/>
            <person name="Shabalina S.A."/>
            <person name="Pearson T.R."/>
            <person name="Brinkac L."/>
            <person name="Tan P."/>
            <person name="Nandi T."/>
            <person name="Crabtree J."/>
            <person name="Badger J."/>
            <person name="Beckstrom-Sternberg S."/>
            <person name="Saqib M."/>
            <person name="Schutzer S.E."/>
            <person name="Keim P."/>
            <person name="Nierman W.C."/>
        </authorList>
    </citation>
    <scope>NUCLEOTIDE SEQUENCE [LARGE SCALE GENOMIC DNA]</scope>
    <source>
        <strain>1710b</strain>
    </source>
</reference>
<sequence>MNLIAKLEQEEIERALAGKTIPEFAPGDTVIVNVNVVEGNRKRVQAYEGVVIAKRNRGLNSSFIVRKISSGEGVERTFQTYSPLLASIVVKRRGDVRRAKLYYLRERSGKSARIKEKLVSKDRAAAAQQ</sequence>
<proteinExistence type="inferred from homology"/>
<comment type="function">
    <text evidence="1">This protein is located at the 30S-50S ribosomal subunit interface and may play a role in the structure and function of the aminoacyl-tRNA binding site.</text>
</comment>
<comment type="similarity">
    <text evidence="1">Belongs to the bacterial ribosomal protein bL19 family.</text>
</comment>
<protein>
    <recommendedName>
        <fullName evidence="1">Large ribosomal subunit protein bL19</fullName>
    </recommendedName>
    <alternativeName>
        <fullName evidence="2">50S ribosomal protein L19</fullName>
    </alternativeName>
</protein>
<name>RL19_BURP1</name>
<organism>
    <name type="scientific">Burkholderia pseudomallei (strain 1710b)</name>
    <dbReference type="NCBI Taxonomy" id="320372"/>
    <lineage>
        <taxon>Bacteria</taxon>
        <taxon>Pseudomonadati</taxon>
        <taxon>Pseudomonadota</taxon>
        <taxon>Betaproteobacteria</taxon>
        <taxon>Burkholderiales</taxon>
        <taxon>Burkholderiaceae</taxon>
        <taxon>Burkholderia</taxon>
        <taxon>pseudomallei group</taxon>
    </lineage>
</organism>
<keyword id="KW-0687">Ribonucleoprotein</keyword>
<keyword id="KW-0689">Ribosomal protein</keyword>
<gene>
    <name evidence="1" type="primary">rplS</name>
    <name type="ordered locus">BURPS1710b_2965</name>
</gene>
<evidence type="ECO:0000255" key="1">
    <source>
        <dbReference type="HAMAP-Rule" id="MF_00402"/>
    </source>
</evidence>
<evidence type="ECO:0000305" key="2"/>
<dbReference type="EMBL" id="CP000124">
    <property type="protein sequence ID" value="ABA48250.1"/>
    <property type="molecule type" value="Genomic_DNA"/>
</dbReference>
<dbReference type="RefSeq" id="WP_004189360.1">
    <property type="nucleotide sequence ID" value="NC_007434.1"/>
</dbReference>
<dbReference type="SMR" id="Q3JQ09"/>
<dbReference type="EnsemblBacteria" id="ABA48250">
    <property type="protein sequence ID" value="ABA48250"/>
    <property type="gene ID" value="BURPS1710b_2965"/>
</dbReference>
<dbReference type="GeneID" id="93061076"/>
<dbReference type="KEGG" id="bpm:BURPS1710b_2965"/>
<dbReference type="HOGENOM" id="CLU_103507_1_0_4"/>
<dbReference type="Proteomes" id="UP000002700">
    <property type="component" value="Chromosome I"/>
</dbReference>
<dbReference type="GO" id="GO:0022625">
    <property type="term" value="C:cytosolic large ribosomal subunit"/>
    <property type="evidence" value="ECO:0007669"/>
    <property type="project" value="TreeGrafter"/>
</dbReference>
<dbReference type="GO" id="GO:0003735">
    <property type="term" value="F:structural constituent of ribosome"/>
    <property type="evidence" value="ECO:0007669"/>
    <property type="project" value="InterPro"/>
</dbReference>
<dbReference type="GO" id="GO:0006412">
    <property type="term" value="P:translation"/>
    <property type="evidence" value="ECO:0007669"/>
    <property type="project" value="UniProtKB-UniRule"/>
</dbReference>
<dbReference type="FunFam" id="2.30.30.790:FF:000001">
    <property type="entry name" value="50S ribosomal protein L19"/>
    <property type="match status" value="1"/>
</dbReference>
<dbReference type="Gene3D" id="2.30.30.790">
    <property type="match status" value="1"/>
</dbReference>
<dbReference type="HAMAP" id="MF_00402">
    <property type="entry name" value="Ribosomal_bL19"/>
    <property type="match status" value="1"/>
</dbReference>
<dbReference type="InterPro" id="IPR001857">
    <property type="entry name" value="Ribosomal_bL19"/>
</dbReference>
<dbReference type="InterPro" id="IPR018257">
    <property type="entry name" value="Ribosomal_bL19_CS"/>
</dbReference>
<dbReference type="InterPro" id="IPR038657">
    <property type="entry name" value="Ribosomal_bL19_sf"/>
</dbReference>
<dbReference type="InterPro" id="IPR008991">
    <property type="entry name" value="Translation_prot_SH3-like_sf"/>
</dbReference>
<dbReference type="NCBIfam" id="TIGR01024">
    <property type="entry name" value="rplS_bact"/>
    <property type="match status" value="1"/>
</dbReference>
<dbReference type="PANTHER" id="PTHR15680:SF9">
    <property type="entry name" value="LARGE RIBOSOMAL SUBUNIT PROTEIN BL19M"/>
    <property type="match status" value="1"/>
</dbReference>
<dbReference type="PANTHER" id="PTHR15680">
    <property type="entry name" value="RIBOSOMAL PROTEIN L19"/>
    <property type="match status" value="1"/>
</dbReference>
<dbReference type="Pfam" id="PF01245">
    <property type="entry name" value="Ribosomal_L19"/>
    <property type="match status" value="1"/>
</dbReference>
<dbReference type="PIRSF" id="PIRSF002191">
    <property type="entry name" value="Ribosomal_L19"/>
    <property type="match status" value="1"/>
</dbReference>
<dbReference type="PRINTS" id="PR00061">
    <property type="entry name" value="RIBOSOMALL19"/>
</dbReference>
<dbReference type="SUPFAM" id="SSF50104">
    <property type="entry name" value="Translation proteins SH3-like domain"/>
    <property type="match status" value="1"/>
</dbReference>
<dbReference type="PROSITE" id="PS01015">
    <property type="entry name" value="RIBOSOMAL_L19"/>
    <property type="match status" value="1"/>
</dbReference>